<name>Y492_METJA</name>
<keyword id="KW-0472">Membrane</keyword>
<keyword id="KW-1185">Reference proteome</keyword>
<keyword id="KW-0812">Transmembrane</keyword>
<keyword id="KW-1133">Transmembrane helix</keyword>
<reference key="1">
    <citation type="journal article" date="1996" name="Science">
        <title>Complete genome sequence of the methanogenic archaeon, Methanococcus jannaschii.</title>
        <authorList>
            <person name="Bult C.J."/>
            <person name="White O."/>
            <person name="Olsen G.J."/>
            <person name="Zhou L."/>
            <person name="Fleischmann R.D."/>
            <person name="Sutton G.G."/>
            <person name="Blake J.A."/>
            <person name="FitzGerald L.M."/>
            <person name="Clayton R.A."/>
            <person name="Gocayne J.D."/>
            <person name="Kerlavage A.R."/>
            <person name="Dougherty B.A."/>
            <person name="Tomb J.-F."/>
            <person name="Adams M.D."/>
            <person name="Reich C.I."/>
            <person name="Overbeek R."/>
            <person name="Kirkness E.F."/>
            <person name="Weinstock K.G."/>
            <person name="Merrick J.M."/>
            <person name="Glodek A."/>
            <person name="Scott J.L."/>
            <person name="Geoghagen N.S.M."/>
            <person name="Weidman J.F."/>
            <person name="Fuhrmann J.L."/>
            <person name="Nguyen D."/>
            <person name="Utterback T.R."/>
            <person name="Kelley J.M."/>
            <person name="Peterson J.D."/>
            <person name="Sadow P.W."/>
            <person name="Hanna M.C."/>
            <person name="Cotton M.D."/>
            <person name="Roberts K.M."/>
            <person name="Hurst M.A."/>
            <person name="Kaine B.P."/>
            <person name="Borodovsky M."/>
            <person name="Klenk H.-P."/>
            <person name="Fraser C.M."/>
            <person name="Smith H.O."/>
            <person name="Woese C.R."/>
            <person name="Venter J.C."/>
        </authorList>
    </citation>
    <scope>NUCLEOTIDE SEQUENCE [LARGE SCALE GENOMIC DNA]</scope>
    <source>
        <strain>ATCC 43067 / DSM 2661 / JAL-1 / JCM 10045 / NBRC 100440</strain>
    </source>
</reference>
<comment type="subcellular location">
    <subcellularLocation>
        <location evidence="2">Membrane</location>
        <topology evidence="2">Single-pass membrane protein</topology>
    </subcellularLocation>
</comment>
<sequence length="95" mass="10695">MNFVIIIAILLLGISLILAFTVLNKSKSKTTMAYKRAQEEKIDTEIKMLKNLKNNVCSGASDEIIDNILNSENNILKEALKNNLDDADVCKKLRR</sequence>
<organism>
    <name type="scientific">Methanocaldococcus jannaschii (strain ATCC 43067 / DSM 2661 / JAL-1 / JCM 10045 / NBRC 100440)</name>
    <name type="common">Methanococcus jannaschii</name>
    <dbReference type="NCBI Taxonomy" id="243232"/>
    <lineage>
        <taxon>Archaea</taxon>
        <taxon>Methanobacteriati</taxon>
        <taxon>Methanobacteriota</taxon>
        <taxon>Methanomada group</taxon>
        <taxon>Methanococci</taxon>
        <taxon>Methanococcales</taxon>
        <taxon>Methanocaldococcaceae</taxon>
        <taxon>Methanocaldococcus</taxon>
    </lineage>
</organism>
<dbReference type="EMBL" id="L77117">
    <property type="protein sequence ID" value="AAB98488.1"/>
    <property type="molecule type" value="Genomic_DNA"/>
</dbReference>
<dbReference type="PIR" id="D64361">
    <property type="entry name" value="D64361"/>
</dbReference>
<dbReference type="RefSeq" id="WP_010869993.1">
    <property type="nucleotide sequence ID" value="NC_000909.1"/>
</dbReference>
<dbReference type="SMR" id="Q57915"/>
<dbReference type="STRING" id="243232.MJ_0492"/>
<dbReference type="PaxDb" id="243232-MJ_0492"/>
<dbReference type="EnsemblBacteria" id="AAB98488">
    <property type="protein sequence ID" value="AAB98488"/>
    <property type="gene ID" value="MJ_0492"/>
</dbReference>
<dbReference type="GeneID" id="1451354"/>
<dbReference type="KEGG" id="mja:MJ_0492"/>
<dbReference type="eggNOG" id="arCOG08284">
    <property type="taxonomic scope" value="Archaea"/>
</dbReference>
<dbReference type="HOGENOM" id="CLU_2353214_0_0_2"/>
<dbReference type="InParanoid" id="Q57915"/>
<dbReference type="OrthoDB" id="375176at2157"/>
<dbReference type="Proteomes" id="UP000000805">
    <property type="component" value="Chromosome"/>
</dbReference>
<dbReference type="GO" id="GO:0016020">
    <property type="term" value="C:membrane"/>
    <property type="evidence" value="ECO:0007669"/>
    <property type="project" value="UniProtKB-SubCell"/>
</dbReference>
<gene>
    <name type="ordered locus">MJ0492</name>
</gene>
<feature type="chain" id="PRO_0000106897" description="Uncharacterized protein MJ0492">
    <location>
        <begin position="1"/>
        <end position="95"/>
    </location>
</feature>
<feature type="transmembrane region" description="Helical" evidence="1">
    <location>
        <begin position="3"/>
        <end position="23"/>
    </location>
</feature>
<accession>Q57915</accession>
<protein>
    <recommendedName>
        <fullName>Uncharacterized protein MJ0492</fullName>
    </recommendedName>
</protein>
<proteinExistence type="predicted"/>
<evidence type="ECO:0000255" key="1"/>
<evidence type="ECO:0000305" key="2"/>